<gene>
    <name evidence="1" type="primary">rplN</name>
    <name type="ordered locus">RSal33209_2153</name>
</gene>
<feature type="chain" id="PRO_1000087141" description="Large ribosomal subunit protein uL14">
    <location>
        <begin position="1"/>
        <end position="122"/>
    </location>
</feature>
<keyword id="KW-1185">Reference proteome</keyword>
<keyword id="KW-0687">Ribonucleoprotein</keyword>
<keyword id="KW-0689">Ribosomal protein</keyword>
<keyword id="KW-0694">RNA-binding</keyword>
<keyword id="KW-0699">rRNA-binding</keyword>
<reference key="1">
    <citation type="journal article" date="2008" name="J. Bacteriol.">
        <title>Genome sequence of the fish pathogen Renibacterium salmoninarum suggests reductive evolution away from an environmental Arthrobacter ancestor.</title>
        <authorList>
            <person name="Wiens G.D."/>
            <person name="Rockey D.D."/>
            <person name="Wu Z."/>
            <person name="Chang J."/>
            <person name="Levy R."/>
            <person name="Crane S."/>
            <person name="Chen D.S."/>
            <person name="Capri G.R."/>
            <person name="Burnett J.R."/>
            <person name="Sudheesh P.S."/>
            <person name="Schipma M.J."/>
            <person name="Burd H."/>
            <person name="Bhattacharyya A."/>
            <person name="Rhodes L.D."/>
            <person name="Kaul R."/>
            <person name="Strom M.S."/>
        </authorList>
    </citation>
    <scope>NUCLEOTIDE SEQUENCE [LARGE SCALE GENOMIC DNA]</scope>
    <source>
        <strain>ATCC 33209 / DSM 20767 / JCM 11484 / NBRC 15589 / NCIMB 2235</strain>
    </source>
</reference>
<comment type="function">
    <text evidence="1">Binds to 23S rRNA. Forms part of two intersubunit bridges in the 70S ribosome.</text>
</comment>
<comment type="subunit">
    <text evidence="1">Part of the 50S ribosomal subunit. Forms a cluster with proteins L3 and L19. In the 70S ribosome, L14 and L19 interact and together make contacts with the 16S rRNA in bridges B5 and B8.</text>
</comment>
<comment type="similarity">
    <text evidence="1">Belongs to the universal ribosomal protein uL14 family.</text>
</comment>
<evidence type="ECO:0000255" key="1">
    <source>
        <dbReference type="HAMAP-Rule" id="MF_01367"/>
    </source>
</evidence>
<evidence type="ECO:0000305" key="2"/>
<name>RL14_RENSM</name>
<organism>
    <name type="scientific">Renibacterium salmoninarum (strain ATCC 33209 / DSM 20767 / JCM 11484 / NBRC 15589 / NCIMB 2235)</name>
    <dbReference type="NCBI Taxonomy" id="288705"/>
    <lineage>
        <taxon>Bacteria</taxon>
        <taxon>Bacillati</taxon>
        <taxon>Actinomycetota</taxon>
        <taxon>Actinomycetes</taxon>
        <taxon>Micrococcales</taxon>
        <taxon>Micrococcaceae</taxon>
        <taxon>Renibacterium</taxon>
    </lineage>
</organism>
<proteinExistence type="inferred from homology"/>
<protein>
    <recommendedName>
        <fullName evidence="1">Large ribosomal subunit protein uL14</fullName>
    </recommendedName>
    <alternativeName>
        <fullName evidence="2">50S ribosomal protein L14</fullName>
    </alternativeName>
</protein>
<dbReference type="EMBL" id="CP000910">
    <property type="protein sequence ID" value="ABY23885.1"/>
    <property type="molecule type" value="Genomic_DNA"/>
</dbReference>
<dbReference type="RefSeq" id="WP_012245551.1">
    <property type="nucleotide sequence ID" value="NC_010168.1"/>
</dbReference>
<dbReference type="SMR" id="A9WSU7"/>
<dbReference type="STRING" id="288705.RSal33209_2153"/>
<dbReference type="KEGG" id="rsa:RSal33209_2153"/>
<dbReference type="eggNOG" id="COG0093">
    <property type="taxonomic scope" value="Bacteria"/>
</dbReference>
<dbReference type="HOGENOM" id="CLU_095071_2_1_11"/>
<dbReference type="Proteomes" id="UP000002007">
    <property type="component" value="Chromosome"/>
</dbReference>
<dbReference type="GO" id="GO:0022625">
    <property type="term" value="C:cytosolic large ribosomal subunit"/>
    <property type="evidence" value="ECO:0007669"/>
    <property type="project" value="TreeGrafter"/>
</dbReference>
<dbReference type="GO" id="GO:0070180">
    <property type="term" value="F:large ribosomal subunit rRNA binding"/>
    <property type="evidence" value="ECO:0007669"/>
    <property type="project" value="TreeGrafter"/>
</dbReference>
<dbReference type="GO" id="GO:0003735">
    <property type="term" value="F:structural constituent of ribosome"/>
    <property type="evidence" value="ECO:0007669"/>
    <property type="project" value="InterPro"/>
</dbReference>
<dbReference type="GO" id="GO:0006412">
    <property type="term" value="P:translation"/>
    <property type="evidence" value="ECO:0007669"/>
    <property type="project" value="UniProtKB-UniRule"/>
</dbReference>
<dbReference type="CDD" id="cd00337">
    <property type="entry name" value="Ribosomal_uL14"/>
    <property type="match status" value="1"/>
</dbReference>
<dbReference type="FunFam" id="2.40.150.20:FF:000001">
    <property type="entry name" value="50S ribosomal protein L14"/>
    <property type="match status" value="1"/>
</dbReference>
<dbReference type="Gene3D" id="2.40.150.20">
    <property type="entry name" value="Ribosomal protein L14"/>
    <property type="match status" value="1"/>
</dbReference>
<dbReference type="HAMAP" id="MF_01367">
    <property type="entry name" value="Ribosomal_uL14"/>
    <property type="match status" value="1"/>
</dbReference>
<dbReference type="InterPro" id="IPR000218">
    <property type="entry name" value="Ribosomal_uL14"/>
</dbReference>
<dbReference type="InterPro" id="IPR005745">
    <property type="entry name" value="Ribosomal_uL14_bac-type"/>
</dbReference>
<dbReference type="InterPro" id="IPR019972">
    <property type="entry name" value="Ribosomal_uL14_CS"/>
</dbReference>
<dbReference type="InterPro" id="IPR036853">
    <property type="entry name" value="Ribosomal_uL14_sf"/>
</dbReference>
<dbReference type="NCBIfam" id="TIGR01067">
    <property type="entry name" value="rplN_bact"/>
    <property type="match status" value="1"/>
</dbReference>
<dbReference type="PANTHER" id="PTHR11761">
    <property type="entry name" value="50S/60S RIBOSOMAL PROTEIN L14/L23"/>
    <property type="match status" value="1"/>
</dbReference>
<dbReference type="PANTHER" id="PTHR11761:SF3">
    <property type="entry name" value="LARGE RIBOSOMAL SUBUNIT PROTEIN UL14M"/>
    <property type="match status" value="1"/>
</dbReference>
<dbReference type="Pfam" id="PF00238">
    <property type="entry name" value="Ribosomal_L14"/>
    <property type="match status" value="1"/>
</dbReference>
<dbReference type="SMART" id="SM01374">
    <property type="entry name" value="Ribosomal_L14"/>
    <property type="match status" value="1"/>
</dbReference>
<dbReference type="SUPFAM" id="SSF50193">
    <property type="entry name" value="Ribosomal protein L14"/>
    <property type="match status" value="1"/>
</dbReference>
<dbReference type="PROSITE" id="PS00049">
    <property type="entry name" value="RIBOSOMAL_L14"/>
    <property type="match status" value="1"/>
</dbReference>
<accession>A9WSU7</accession>
<sequence>MIQQESRLKVADNTGAKEILAIRVLGGSGRRYAGIGDVIVATVKDAIPGGNVKKGDVVKAVIVRTKKERRRADGSYIKFDENAAVILKNDGDPRGTRIFGPVGRELRDKKFMKIISLAPEVL</sequence>